<protein>
    <recommendedName>
        <fullName>Protein trichome birefringence-like 9</fullName>
    </recommendedName>
</protein>
<dbReference type="EMBL" id="AP002544">
    <property type="protein sequence ID" value="BAB09688.1"/>
    <property type="molecule type" value="Genomic_DNA"/>
</dbReference>
<dbReference type="EMBL" id="CP002688">
    <property type="protein sequence ID" value="AED90987.1"/>
    <property type="molecule type" value="Genomic_DNA"/>
</dbReference>
<dbReference type="EMBL" id="CP002688">
    <property type="protein sequence ID" value="AED90988.1"/>
    <property type="status" value="ALT_INIT"/>
    <property type="molecule type" value="Genomic_DNA"/>
</dbReference>
<dbReference type="EMBL" id="AF361591">
    <property type="protein sequence ID" value="AAK32759.1"/>
    <property type="status" value="ALT_INIT"/>
    <property type="molecule type" value="mRNA"/>
</dbReference>
<dbReference type="EMBL" id="AY133558">
    <property type="protein sequence ID" value="AAM91388.1"/>
    <property type="molecule type" value="mRNA"/>
</dbReference>
<dbReference type="RefSeq" id="NP_568164.2">
    <property type="nucleotide sequence ID" value="NM_120705.3"/>
</dbReference>
<dbReference type="RefSeq" id="NP_974739.1">
    <property type="nucleotide sequence ID" value="NM_203010.1"/>
</dbReference>
<dbReference type="SMR" id="Q9FFZ4"/>
<dbReference type="FunCoup" id="Q9FFZ4">
    <property type="interactions" value="13"/>
</dbReference>
<dbReference type="STRING" id="3702.Q9FFZ4"/>
<dbReference type="iPTMnet" id="Q9FFZ4"/>
<dbReference type="PaxDb" id="3702-AT5G06230.1"/>
<dbReference type="ProteomicsDB" id="234247"/>
<dbReference type="EnsemblPlants" id="AT5G06230.1">
    <property type="protein sequence ID" value="AT5G06230.1"/>
    <property type="gene ID" value="AT5G06230"/>
</dbReference>
<dbReference type="GeneID" id="830510"/>
<dbReference type="Gramene" id="AT5G06230.1">
    <property type="protein sequence ID" value="AT5G06230.1"/>
    <property type="gene ID" value="AT5G06230"/>
</dbReference>
<dbReference type="KEGG" id="ath:AT5G06230"/>
<dbReference type="Araport" id="AT5G06230"/>
<dbReference type="TAIR" id="AT5G06230">
    <property type="gene designation" value="TBL9"/>
</dbReference>
<dbReference type="eggNOG" id="ENOG502QSSZ">
    <property type="taxonomic scope" value="Eukaryota"/>
</dbReference>
<dbReference type="InParanoid" id="Q9FFZ4"/>
<dbReference type="OrthoDB" id="630188at2759"/>
<dbReference type="PhylomeDB" id="Q9FFZ4"/>
<dbReference type="PRO" id="PR:Q9FFZ4"/>
<dbReference type="Proteomes" id="UP000006548">
    <property type="component" value="Chromosome 5"/>
</dbReference>
<dbReference type="ExpressionAtlas" id="Q9FFZ4">
    <property type="expression patterns" value="baseline and differential"/>
</dbReference>
<dbReference type="GO" id="GO:0016020">
    <property type="term" value="C:membrane"/>
    <property type="evidence" value="ECO:0007669"/>
    <property type="project" value="UniProtKB-SubCell"/>
</dbReference>
<dbReference type="GO" id="GO:0016413">
    <property type="term" value="F:O-acetyltransferase activity"/>
    <property type="evidence" value="ECO:0007669"/>
    <property type="project" value="InterPro"/>
</dbReference>
<dbReference type="InterPro" id="IPR029962">
    <property type="entry name" value="TBL"/>
</dbReference>
<dbReference type="InterPro" id="IPR026057">
    <property type="entry name" value="TBL_C"/>
</dbReference>
<dbReference type="InterPro" id="IPR025846">
    <property type="entry name" value="TBL_N"/>
</dbReference>
<dbReference type="PANTHER" id="PTHR32285:SF53">
    <property type="entry name" value="PROTEIN TRICHOME BIREFRINGENCE-LIKE 9"/>
    <property type="match status" value="1"/>
</dbReference>
<dbReference type="PANTHER" id="PTHR32285">
    <property type="entry name" value="PROTEIN TRICHOME BIREFRINGENCE-LIKE 9-RELATED"/>
    <property type="match status" value="1"/>
</dbReference>
<dbReference type="Pfam" id="PF13839">
    <property type="entry name" value="PC-Esterase"/>
    <property type="match status" value="1"/>
</dbReference>
<dbReference type="Pfam" id="PF14416">
    <property type="entry name" value="PMR5N"/>
    <property type="match status" value="1"/>
</dbReference>
<gene>
    <name type="primary">TBL9</name>
    <name type="ordered locus">At5g06230</name>
    <name type="ORF">MBL20.11</name>
</gene>
<evidence type="ECO:0000250" key="1">
    <source>
        <dbReference type="UniProtKB" id="Q9FG35"/>
    </source>
</evidence>
<evidence type="ECO:0000250" key="2">
    <source>
        <dbReference type="UniProtKB" id="Q9LY46"/>
    </source>
</evidence>
<evidence type="ECO:0000255" key="3"/>
<evidence type="ECO:0000305" key="4"/>
<evidence type="ECO:0000305" key="5">
    <source>
    </source>
</evidence>
<sequence length="413" mass="48140">MDHHQLFSLCSFSYIFKIKKHLFVSLFLLSLLIFSTVVVDVMPSLRIGLLSSSSSQTVTKECDYSKGKWVRRASSSSSSVNGLFYGEECRFLDSGFRCHKHGRKDSGYLDWRWQPHGCDLPRFNASDLLERSRNGRIVFVGDSIGRNQWESLMCMLSQAIPNKSEIYEVNGNPITKHKGFLSMRFPRENLTVEYHRSPFLVVIGRPPDKSPKEIKTTVRVDEFNWQSKRWVGSDVLVFNSGHWWNEDKTVLTGCYFEEGRKVNKTMGVMEAFGKSLKTWKSWVLEKLDPDKSYVFFRSYSPVHYRNGTWNTGGLCDAEIEPETDKRKLEPDASHNEYIYKVIEEMRYRHSKVKFLNITYLTEFRKDGHISRYREQGTSVDVPQDCSHWCLPGVPDTWNEILYAQLLSMNYRTK</sequence>
<feature type="chain" id="PRO_0000425375" description="Protein trichome birefringence-like 9">
    <location>
        <begin position="1"/>
        <end position="413"/>
    </location>
</feature>
<feature type="transmembrane region" description="Helical; Signal-anchor for type II membrane protein" evidence="3">
    <location>
        <begin position="22"/>
        <end position="42"/>
    </location>
</feature>
<feature type="short sequence motif" description="GDS motif">
    <location>
        <begin position="141"/>
        <end position="143"/>
    </location>
</feature>
<feature type="short sequence motif" description="DCXHWCLPGXXDXWN motif">
    <location>
        <begin position="384"/>
        <end position="398"/>
    </location>
</feature>
<keyword id="KW-0472">Membrane</keyword>
<keyword id="KW-1185">Reference proteome</keyword>
<keyword id="KW-0735">Signal-anchor</keyword>
<keyword id="KW-0812">Transmembrane</keyword>
<keyword id="KW-1133">Transmembrane helix</keyword>
<accession>Q9FFZ4</accession>
<accession>Q9ASZ0</accession>
<reference key="1">
    <citation type="submission" date="2000-06" db="EMBL/GenBank/DDBJ databases">
        <title>Structural analysis of Arabidopsis thaliana chromosome 5. XI.</title>
        <authorList>
            <person name="Kaneko T."/>
            <person name="Katoh T."/>
            <person name="Asamizu E."/>
            <person name="Sato S."/>
            <person name="Nakamura Y."/>
            <person name="Kotani H."/>
            <person name="Tabata S."/>
        </authorList>
    </citation>
    <scope>NUCLEOTIDE SEQUENCE [LARGE SCALE GENOMIC DNA]</scope>
    <source>
        <strain>cv. Columbia</strain>
    </source>
</reference>
<reference key="2">
    <citation type="journal article" date="2017" name="Plant J.">
        <title>Araport11: a complete reannotation of the Arabidopsis thaliana reference genome.</title>
        <authorList>
            <person name="Cheng C.Y."/>
            <person name="Krishnakumar V."/>
            <person name="Chan A.P."/>
            <person name="Thibaud-Nissen F."/>
            <person name="Schobel S."/>
            <person name="Town C.D."/>
        </authorList>
    </citation>
    <scope>GENOME REANNOTATION</scope>
    <source>
        <strain>cv. Columbia</strain>
    </source>
</reference>
<reference key="3">
    <citation type="journal article" date="2003" name="Science">
        <title>Empirical analysis of transcriptional activity in the Arabidopsis genome.</title>
        <authorList>
            <person name="Yamada K."/>
            <person name="Lim J."/>
            <person name="Dale J.M."/>
            <person name="Chen H."/>
            <person name="Shinn P."/>
            <person name="Palm C.J."/>
            <person name="Southwick A.M."/>
            <person name="Wu H.C."/>
            <person name="Kim C.J."/>
            <person name="Nguyen M."/>
            <person name="Pham P.K."/>
            <person name="Cheuk R.F."/>
            <person name="Karlin-Newmann G."/>
            <person name="Liu S.X."/>
            <person name="Lam B."/>
            <person name="Sakano H."/>
            <person name="Wu T."/>
            <person name="Yu G."/>
            <person name="Miranda M."/>
            <person name="Quach H.L."/>
            <person name="Tripp M."/>
            <person name="Chang C.H."/>
            <person name="Lee J.M."/>
            <person name="Toriumi M.J."/>
            <person name="Chan M.M."/>
            <person name="Tang C.C."/>
            <person name="Onodera C.S."/>
            <person name="Deng J.M."/>
            <person name="Akiyama K."/>
            <person name="Ansari Y."/>
            <person name="Arakawa T."/>
            <person name="Banh J."/>
            <person name="Banno F."/>
            <person name="Bowser L."/>
            <person name="Brooks S.Y."/>
            <person name="Carninci P."/>
            <person name="Chao Q."/>
            <person name="Choy N."/>
            <person name="Enju A."/>
            <person name="Goldsmith A.D."/>
            <person name="Gurjal M."/>
            <person name="Hansen N.F."/>
            <person name="Hayashizaki Y."/>
            <person name="Johnson-Hopson C."/>
            <person name="Hsuan V.W."/>
            <person name="Iida K."/>
            <person name="Karnes M."/>
            <person name="Khan S."/>
            <person name="Koesema E."/>
            <person name="Ishida J."/>
            <person name="Jiang P.X."/>
            <person name="Jones T."/>
            <person name="Kawai J."/>
            <person name="Kamiya A."/>
            <person name="Meyers C."/>
            <person name="Nakajima M."/>
            <person name="Narusaka M."/>
            <person name="Seki M."/>
            <person name="Sakurai T."/>
            <person name="Satou M."/>
            <person name="Tamse R."/>
            <person name="Vaysberg M."/>
            <person name="Wallender E.K."/>
            <person name="Wong C."/>
            <person name="Yamamura Y."/>
            <person name="Yuan S."/>
            <person name="Shinozaki K."/>
            <person name="Davis R.W."/>
            <person name="Theologis A."/>
            <person name="Ecker J.R."/>
        </authorList>
    </citation>
    <scope>NUCLEOTIDE SEQUENCE [LARGE SCALE MRNA] OF 15-413</scope>
    <source>
        <strain>cv. Columbia</strain>
    </source>
</reference>
<reference key="4">
    <citation type="journal article" date="2007" name="Plant J.">
        <title>Arabidopsis ESK1 encodes a novel regulator of freezing tolerance.</title>
        <authorList>
            <person name="Xin Z."/>
            <person name="Mandaokar A."/>
            <person name="Chen J."/>
            <person name="Last R.L."/>
            <person name="Browse J."/>
        </authorList>
    </citation>
    <scope>GENE FAMILY</scope>
    <source>
        <strain>cv. Columbia</strain>
    </source>
</reference>
<reference key="5">
    <citation type="journal article" date="2010" name="Plant Physiol.">
        <title>TRICHOME BIREFRINGENCE and its homolog AT5G01360 encode plant-specific DUF231 proteins required for cellulose biosynthesis in Arabidopsis.</title>
        <authorList>
            <person name="Bischoff V."/>
            <person name="Nita S."/>
            <person name="Neumetzler L."/>
            <person name="Schindelasch D."/>
            <person name="Urbain A."/>
            <person name="Eshed R."/>
            <person name="Persson S."/>
            <person name="Delmer D."/>
            <person name="Scheible W.R."/>
        </authorList>
    </citation>
    <scope>GENE FAMILY</scope>
    <scope>NOMENCLATURE</scope>
</reference>
<reference key="6">
    <citation type="journal article" date="2010" name="Plant Signal. Behav.">
        <title>Involvement of TBL/DUF231 proteins into cell wall biology.</title>
        <authorList>
            <person name="Bischoff V."/>
            <person name="Selbig J."/>
            <person name="Scheible W.R."/>
        </authorList>
    </citation>
    <scope>3D-STRUCTURE MODELING</scope>
</reference>
<comment type="function">
    <text evidence="1 2">May act as a bridging protein that binds pectin and other cell wall polysaccharides. Probably involved in maintaining esterification of pectins (By similarity). May be involved in the specific O-acetylation of cell wall polymers (By similarity).</text>
</comment>
<comment type="subcellular location">
    <subcellularLocation>
        <location evidence="4">Membrane</location>
        <topology evidence="4">Single-pass type II membrane protein</topology>
    </subcellularLocation>
</comment>
<comment type="miscellaneous">
    <text evidence="5">Contains 2 motifs that are conserved in esterases, but it is unlikely that this protein belongs to the catalytically active pectin esterases.</text>
</comment>
<comment type="similarity">
    <text evidence="4">Belongs to the PC-esterase family. TBL subfamily.</text>
</comment>
<comment type="sequence caution" evidence="4">
    <conflict type="erroneous initiation">
        <sequence resource="EMBL-CDS" id="AAK32759"/>
    </conflict>
    <text>Truncated N-terminus.</text>
</comment>
<comment type="sequence caution" evidence="4">
    <conflict type="erroneous initiation">
        <sequence resource="EMBL-CDS" id="AED90988"/>
    </conflict>
    <text>Truncated N-terminus.</text>
</comment>
<name>TBL9_ARATH</name>
<organism>
    <name type="scientific">Arabidopsis thaliana</name>
    <name type="common">Mouse-ear cress</name>
    <dbReference type="NCBI Taxonomy" id="3702"/>
    <lineage>
        <taxon>Eukaryota</taxon>
        <taxon>Viridiplantae</taxon>
        <taxon>Streptophyta</taxon>
        <taxon>Embryophyta</taxon>
        <taxon>Tracheophyta</taxon>
        <taxon>Spermatophyta</taxon>
        <taxon>Magnoliopsida</taxon>
        <taxon>eudicotyledons</taxon>
        <taxon>Gunneridae</taxon>
        <taxon>Pentapetalae</taxon>
        <taxon>rosids</taxon>
        <taxon>malvids</taxon>
        <taxon>Brassicales</taxon>
        <taxon>Brassicaceae</taxon>
        <taxon>Camelineae</taxon>
        <taxon>Arabidopsis</taxon>
    </lineage>
</organism>
<proteinExistence type="evidence at transcript level"/>